<evidence type="ECO:0000255" key="1">
    <source>
        <dbReference type="HAMAP-Rule" id="MF_01393"/>
    </source>
</evidence>
<proteinExistence type="inferred from homology"/>
<accession>A1VF66</accession>
<protein>
    <recommendedName>
        <fullName evidence="1">ATP synthase subunit a</fullName>
    </recommendedName>
    <alternativeName>
        <fullName evidence="1">ATP synthase F0 sector subunit a</fullName>
    </alternativeName>
    <alternativeName>
        <fullName evidence="1">F-ATPase subunit 6</fullName>
    </alternativeName>
</protein>
<dbReference type="EMBL" id="CP000527">
    <property type="protein sequence ID" value="ABM29082.1"/>
    <property type="molecule type" value="Genomic_DNA"/>
</dbReference>
<dbReference type="RefSeq" id="WP_010938217.1">
    <property type="nucleotide sequence ID" value="NC_008751.1"/>
</dbReference>
<dbReference type="SMR" id="A1VF66"/>
<dbReference type="KEGG" id="dvl:Dvul_2066"/>
<dbReference type="HOGENOM" id="CLU_041018_2_2_7"/>
<dbReference type="Proteomes" id="UP000009173">
    <property type="component" value="Chromosome"/>
</dbReference>
<dbReference type="GO" id="GO:0005886">
    <property type="term" value="C:plasma membrane"/>
    <property type="evidence" value="ECO:0007669"/>
    <property type="project" value="UniProtKB-SubCell"/>
</dbReference>
<dbReference type="GO" id="GO:0045259">
    <property type="term" value="C:proton-transporting ATP synthase complex"/>
    <property type="evidence" value="ECO:0007669"/>
    <property type="project" value="UniProtKB-KW"/>
</dbReference>
<dbReference type="GO" id="GO:0046933">
    <property type="term" value="F:proton-transporting ATP synthase activity, rotational mechanism"/>
    <property type="evidence" value="ECO:0007669"/>
    <property type="project" value="UniProtKB-UniRule"/>
</dbReference>
<dbReference type="GO" id="GO:0042777">
    <property type="term" value="P:proton motive force-driven plasma membrane ATP synthesis"/>
    <property type="evidence" value="ECO:0007669"/>
    <property type="project" value="TreeGrafter"/>
</dbReference>
<dbReference type="CDD" id="cd00310">
    <property type="entry name" value="ATP-synt_Fo_a_6"/>
    <property type="match status" value="1"/>
</dbReference>
<dbReference type="Gene3D" id="1.20.120.220">
    <property type="entry name" value="ATP synthase, F0 complex, subunit A"/>
    <property type="match status" value="1"/>
</dbReference>
<dbReference type="HAMAP" id="MF_01393">
    <property type="entry name" value="ATP_synth_a_bact"/>
    <property type="match status" value="1"/>
</dbReference>
<dbReference type="InterPro" id="IPR045082">
    <property type="entry name" value="ATP_syn_F0_a_bact/chloroplast"/>
</dbReference>
<dbReference type="InterPro" id="IPR000568">
    <property type="entry name" value="ATP_synth_F0_asu"/>
</dbReference>
<dbReference type="InterPro" id="IPR023011">
    <property type="entry name" value="ATP_synth_F0_asu_AS"/>
</dbReference>
<dbReference type="InterPro" id="IPR035908">
    <property type="entry name" value="F0_ATP_A_sf"/>
</dbReference>
<dbReference type="NCBIfam" id="TIGR01131">
    <property type="entry name" value="ATP_synt_6_or_A"/>
    <property type="match status" value="1"/>
</dbReference>
<dbReference type="PANTHER" id="PTHR42823">
    <property type="entry name" value="ATP SYNTHASE SUBUNIT A, CHLOROPLASTIC"/>
    <property type="match status" value="1"/>
</dbReference>
<dbReference type="PANTHER" id="PTHR42823:SF3">
    <property type="entry name" value="ATP SYNTHASE SUBUNIT A, CHLOROPLASTIC"/>
    <property type="match status" value="1"/>
</dbReference>
<dbReference type="Pfam" id="PF00119">
    <property type="entry name" value="ATP-synt_A"/>
    <property type="match status" value="1"/>
</dbReference>
<dbReference type="PRINTS" id="PR00123">
    <property type="entry name" value="ATPASEA"/>
</dbReference>
<dbReference type="SUPFAM" id="SSF81336">
    <property type="entry name" value="F1F0 ATP synthase subunit A"/>
    <property type="match status" value="1"/>
</dbReference>
<dbReference type="PROSITE" id="PS00449">
    <property type="entry name" value="ATPASE_A"/>
    <property type="match status" value="1"/>
</dbReference>
<organism>
    <name type="scientific">Nitratidesulfovibrio vulgaris (strain DP4)</name>
    <name type="common">Desulfovibrio vulgaris</name>
    <dbReference type="NCBI Taxonomy" id="391774"/>
    <lineage>
        <taxon>Bacteria</taxon>
        <taxon>Pseudomonadati</taxon>
        <taxon>Thermodesulfobacteriota</taxon>
        <taxon>Desulfovibrionia</taxon>
        <taxon>Desulfovibrionales</taxon>
        <taxon>Desulfovibrionaceae</taxon>
        <taxon>Nitratidesulfovibrio</taxon>
    </lineage>
</organism>
<keyword id="KW-0066">ATP synthesis</keyword>
<keyword id="KW-0997">Cell inner membrane</keyword>
<keyword id="KW-1003">Cell membrane</keyword>
<keyword id="KW-0138">CF(0)</keyword>
<keyword id="KW-0375">Hydrogen ion transport</keyword>
<keyword id="KW-0406">Ion transport</keyword>
<keyword id="KW-0472">Membrane</keyword>
<keyword id="KW-0812">Transmembrane</keyword>
<keyword id="KW-1133">Transmembrane helix</keyword>
<keyword id="KW-0813">Transport</keyword>
<comment type="function">
    <text evidence="1">Key component of the proton channel; it plays a direct role in the translocation of protons across the membrane.</text>
</comment>
<comment type="subunit">
    <text evidence="1">F-type ATPases have 2 components, CF(1) - the catalytic core - and CF(0) - the membrane proton channel. CF(1) has five subunits: alpha(3), beta(3), gamma(1), delta(1), epsilon(1). CF(0) has three main subunits: a(1), b(2) and c(9-12). The alpha and beta chains form an alternating ring which encloses part of the gamma chain. CF(1) is attached to CF(0) by a central stalk formed by the gamma and epsilon chains, while a peripheral stalk is formed by the delta and b chains.</text>
</comment>
<comment type="subcellular location">
    <subcellularLocation>
        <location evidence="1">Cell inner membrane</location>
        <topology evidence="1">Multi-pass membrane protein</topology>
    </subcellularLocation>
</comment>
<comment type="similarity">
    <text evidence="1">Belongs to the ATPase A chain family.</text>
</comment>
<feature type="chain" id="PRO_0000362287" description="ATP synthase subunit a">
    <location>
        <begin position="1"/>
        <end position="233"/>
    </location>
</feature>
<feature type="transmembrane region" description="Helical" evidence="1">
    <location>
        <begin position="29"/>
        <end position="49"/>
    </location>
</feature>
<feature type="transmembrane region" description="Helical" evidence="1">
    <location>
        <begin position="86"/>
        <end position="106"/>
    </location>
</feature>
<feature type="transmembrane region" description="Helical" evidence="1">
    <location>
        <begin position="118"/>
        <end position="135"/>
    </location>
</feature>
<feature type="transmembrane region" description="Helical" evidence="1">
    <location>
        <begin position="188"/>
        <end position="208"/>
    </location>
</feature>
<feature type="transmembrane region" description="Helical" evidence="1">
    <location>
        <begin position="209"/>
        <end position="229"/>
    </location>
</feature>
<reference key="1">
    <citation type="journal article" date="2009" name="Environ. Microbiol.">
        <title>Contribution of mobile genetic elements to Desulfovibrio vulgaris genome plasticity.</title>
        <authorList>
            <person name="Walker C.B."/>
            <person name="Stolyar S."/>
            <person name="Chivian D."/>
            <person name="Pinel N."/>
            <person name="Gabster J.A."/>
            <person name="Dehal P.S."/>
            <person name="He Z."/>
            <person name="Yang Z.K."/>
            <person name="Yen H.C."/>
            <person name="Zhou J."/>
            <person name="Wall J.D."/>
            <person name="Hazen T.C."/>
            <person name="Arkin A.P."/>
            <person name="Stahl D.A."/>
        </authorList>
    </citation>
    <scope>NUCLEOTIDE SEQUENCE [LARGE SCALE GENOMIC DNA]</scope>
    <source>
        <strain>DP4</strain>
    </source>
</reference>
<gene>
    <name evidence="1" type="primary">atpB</name>
    <name type="ordered locus">Dvul_2066</name>
</gene>
<name>ATP6_NITV4</name>
<sequence>MAGGLPHPVLWSTLLNVDTITIGGATVEFKHVFYTWCAMAILFSLGLIVRSSLKVVPGALQNVFEVVIGGLEDFVVGNIGEDGRKVFPLLGGIFLFILFQNLLGLVPGCDAPTANVNTNAAMALFVFGYYNYQGLKRWGPGYIKHFMGPMTWLTPLMLPLEIISHCARPLSLTLRLFGNIRGEEIVMVLFFLMAPIVGTLPVYFLFLLGKVLQAFIFFMLTMVYLKGAFEHAH</sequence>